<name>AROQ_CLOPE</name>
<dbReference type="EC" id="4.2.1.10" evidence="1"/>
<dbReference type="EMBL" id="BA000016">
    <property type="protein sequence ID" value="BAB80408.1"/>
    <property type="molecule type" value="Genomic_DNA"/>
</dbReference>
<dbReference type="RefSeq" id="WP_003453023.1">
    <property type="nucleotide sequence ID" value="NC_003366.1"/>
</dbReference>
<dbReference type="SMR" id="Q8XMI6"/>
<dbReference type="STRING" id="195102.gene:10489964"/>
<dbReference type="KEGG" id="cpe:CPE0702"/>
<dbReference type="HOGENOM" id="CLU_090968_3_0_9"/>
<dbReference type="UniPathway" id="UPA00053">
    <property type="reaction ID" value="UER00086"/>
</dbReference>
<dbReference type="Proteomes" id="UP000000818">
    <property type="component" value="Chromosome"/>
</dbReference>
<dbReference type="GO" id="GO:0003855">
    <property type="term" value="F:3-dehydroquinate dehydratase activity"/>
    <property type="evidence" value="ECO:0007669"/>
    <property type="project" value="UniProtKB-UniRule"/>
</dbReference>
<dbReference type="GO" id="GO:0008652">
    <property type="term" value="P:amino acid biosynthetic process"/>
    <property type="evidence" value="ECO:0007669"/>
    <property type="project" value="UniProtKB-KW"/>
</dbReference>
<dbReference type="GO" id="GO:0009073">
    <property type="term" value="P:aromatic amino acid family biosynthetic process"/>
    <property type="evidence" value="ECO:0007669"/>
    <property type="project" value="UniProtKB-KW"/>
</dbReference>
<dbReference type="GO" id="GO:0009423">
    <property type="term" value="P:chorismate biosynthetic process"/>
    <property type="evidence" value="ECO:0007669"/>
    <property type="project" value="UniProtKB-UniRule"/>
</dbReference>
<dbReference type="GO" id="GO:0019631">
    <property type="term" value="P:quinate catabolic process"/>
    <property type="evidence" value="ECO:0007669"/>
    <property type="project" value="TreeGrafter"/>
</dbReference>
<dbReference type="CDD" id="cd00466">
    <property type="entry name" value="DHQase_II"/>
    <property type="match status" value="1"/>
</dbReference>
<dbReference type="Gene3D" id="3.40.50.9100">
    <property type="entry name" value="Dehydroquinase, class II"/>
    <property type="match status" value="1"/>
</dbReference>
<dbReference type="HAMAP" id="MF_00169">
    <property type="entry name" value="AroQ"/>
    <property type="match status" value="1"/>
</dbReference>
<dbReference type="InterPro" id="IPR001874">
    <property type="entry name" value="DHquinase_II"/>
</dbReference>
<dbReference type="InterPro" id="IPR018509">
    <property type="entry name" value="DHquinase_II_CS"/>
</dbReference>
<dbReference type="InterPro" id="IPR036441">
    <property type="entry name" value="DHquinase_II_sf"/>
</dbReference>
<dbReference type="NCBIfam" id="TIGR01088">
    <property type="entry name" value="aroQ"/>
    <property type="match status" value="1"/>
</dbReference>
<dbReference type="NCBIfam" id="NF003805">
    <property type="entry name" value="PRK05395.1-2"/>
    <property type="match status" value="1"/>
</dbReference>
<dbReference type="NCBIfam" id="NF003806">
    <property type="entry name" value="PRK05395.1-3"/>
    <property type="match status" value="1"/>
</dbReference>
<dbReference type="NCBIfam" id="NF003807">
    <property type="entry name" value="PRK05395.1-4"/>
    <property type="match status" value="1"/>
</dbReference>
<dbReference type="PANTHER" id="PTHR21272">
    <property type="entry name" value="CATABOLIC 3-DEHYDROQUINASE"/>
    <property type="match status" value="1"/>
</dbReference>
<dbReference type="PANTHER" id="PTHR21272:SF3">
    <property type="entry name" value="CATABOLIC 3-DEHYDROQUINASE"/>
    <property type="match status" value="1"/>
</dbReference>
<dbReference type="Pfam" id="PF01220">
    <property type="entry name" value="DHquinase_II"/>
    <property type="match status" value="1"/>
</dbReference>
<dbReference type="PIRSF" id="PIRSF001399">
    <property type="entry name" value="DHquinase_II"/>
    <property type="match status" value="1"/>
</dbReference>
<dbReference type="SUPFAM" id="SSF52304">
    <property type="entry name" value="Type II 3-dehydroquinate dehydratase"/>
    <property type="match status" value="1"/>
</dbReference>
<dbReference type="PROSITE" id="PS01029">
    <property type="entry name" value="DEHYDROQUINASE_II"/>
    <property type="match status" value="1"/>
</dbReference>
<proteinExistence type="inferred from homology"/>
<keyword id="KW-0028">Amino-acid biosynthesis</keyword>
<keyword id="KW-0057">Aromatic amino acid biosynthesis</keyword>
<keyword id="KW-0456">Lyase</keyword>
<keyword id="KW-1185">Reference proteome</keyword>
<gene>
    <name evidence="1" type="primary">aroQ</name>
    <name type="ordered locus">CPE0702</name>
</gene>
<reference key="1">
    <citation type="journal article" date="2002" name="Proc. Natl. Acad. Sci. U.S.A.">
        <title>Complete genome sequence of Clostridium perfringens, an anaerobic flesh-eater.</title>
        <authorList>
            <person name="Shimizu T."/>
            <person name="Ohtani K."/>
            <person name="Hirakawa H."/>
            <person name="Ohshima K."/>
            <person name="Yamashita A."/>
            <person name="Shiba T."/>
            <person name="Ogasawara N."/>
            <person name="Hattori M."/>
            <person name="Kuhara S."/>
            <person name="Hayashi H."/>
        </authorList>
    </citation>
    <scope>NUCLEOTIDE SEQUENCE [LARGE SCALE GENOMIC DNA]</scope>
    <source>
        <strain>13 / Type A</strain>
    </source>
</reference>
<accession>Q8XMI6</accession>
<sequence>MKIMVINGPNLNLLGIREKEIYGAKDFNQVIDYIKEEGKELGLEVNCFQSNIEGEIINFIHNAYFEKYDGIIINPGAYTHYSIAIYDALKGVEIPTVEVHLSNIHKREEFRHKSVTAPACIGQISGFGEYGYIMAMNALKNHIKSK</sequence>
<organism>
    <name type="scientific">Clostridium perfringens (strain 13 / Type A)</name>
    <dbReference type="NCBI Taxonomy" id="195102"/>
    <lineage>
        <taxon>Bacteria</taxon>
        <taxon>Bacillati</taxon>
        <taxon>Bacillota</taxon>
        <taxon>Clostridia</taxon>
        <taxon>Eubacteriales</taxon>
        <taxon>Clostridiaceae</taxon>
        <taxon>Clostridium</taxon>
    </lineage>
</organism>
<feature type="chain" id="PRO_0000159892" description="3-dehydroquinate dehydratase">
    <location>
        <begin position="1"/>
        <end position="146"/>
    </location>
</feature>
<feature type="active site" description="Proton acceptor" evidence="1">
    <location>
        <position position="22"/>
    </location>
</feature>
<feature type="active site" description="Proton donor" evidence="1">
    <location>
        <position position="100"/>
    </location>
</feature>
<feature type="binding site" evidence="1">
    <location>
        <position position="74"/>
    </location>
    <ligand>
        <name>substrate</name>
    </ligand>
</feature>
<feature type="binding site" evidence="1">
    <location>
        <position position="80"/>
    </location>
    <ligand>
        <name>substrate</name>
    </ligand>
</feature>
<feature type="binding site" evidence="1">
    <location>
        <position position="87"/>
    </location>
    <ligand>
        <name>substrate</name>
    </ligand>
</feature>
<feature type="binding site" evidence="1">
    <location>
        <begin position="101"/>
        <end position="102"/>
    </location>
    <ligand>
        <name>substrate</name>
    </ligand>
</feature>
<feature type="binding site" evidence="1">
    <location>
        <position position="111"/>
    </location>
    <ligand>
        <name>substrate</name>
    </ligand>
</feature>
<feature type="site" description="Transition state stabilizer" evidence="1">
    <location>
        <position position="17"/>
    </location>
</feature>
<evidence type="ECO:0000255" key="1">
    <source>
        <dbReference type="HAMAP-Rule" id="MF_00169"/>
    </source>
</evidence>
<comment type="function">
    <text evidence="1">Catalyzes a trans-dehydration via an enolate intermediate.</text>
</comment>
<comment type="catalytic activity">
    <reaction evidence="1">
        <text>3-dehydroquinate = 3-dehydroshikimate + H2O</text>
        <dbReference type="Rhea" id="RHEA:21096"/>
        <dbReference type="ChEBI" id="CHEBI:15377"/>
        <dbReference type="ChEBI" id="CHEBI:16630"/>
        <dbReference type="ChEBI" id="CHEBI:32364"/>
        <dbReference type="EC" id="4.2.1.10"/>
    </reaction>
</comment>
<comment type="pathway">
    <text evidence="1">Metabolic intermediate biosynthesis; chorismate biosynthesis; chorismate from D-erythrose 4-phosphate and phosphoenolpyruvate: step 3/7.</text>
</comment>
<comment type="subunit">
    <text evidence="1">Homododecamer.</text>
</comment>
<comment type="similarity">
    <text evidence="1">Belongs to the type-II 3-dehydroquinase family.</text>
</comment>
<protein>
    <recommendedName>
        <fullName evidence="1">3-dehydroquinate dehydratase</fullName>
        <shortName evidence="1">3-dehydroquinase</shortName>
        <ecNumber evidence="1">4.2.1.10</ecNumber>
    </recommendedName>
    <alternativeName>
        <fullName evidence="1">Type II DHQase</fullName>
    </alternativeName>
</protein>